<accession>B9DM40</accession>
<protein>
    <recommendedName>
        <fullName evidence="1">Large ribosomal subunit protein uL16</fullName>
    </recommendedName>
    <alternativeName>
        <fullName evidence="3">50S ribosomal protein L16</fullName>
    </alternativeName>
</protein>
<gene>
    <name evidence="1" type="primary">rplP</name>
    <name type="ordered locus">Sca_1728</name>
</gene>
<keyword id="KW-1185">Reference proteome</keyword>
<keyword id="KW-0687">Ribonucleoprotein</keyword>
<keyword id="KW-0689">Ribosomal protein</keyword>
<keyword id="KW-0694">RNA-binding</keyword>
<keyword id="KW-0699">rRNA-binding</keyword>
<keyword id="KW-0820">tRNA-binding</keyword>
<organism>
    <name type="scientific">Staphylococcus carnosus (strain TM300)</name>
    <dbReference type="NCBI Taxonomy" id="396513"/>
    <lineage>
        <taxon>Bacteria</taxon>
        <taxon>Bacillati</taxon>
        <taxon>Bacillota</taxon>
        <taxon>Bacilli</taxon>
        <taxon>Bacillales</taxon>
        <taxon>Staphylococcaceae</taxon>
        <taxon>Staphylococcus</taxon>
    </lineage>
</organism>
<sequence length="144" mass="16240">MLLPKRVKYRRQHRPKTTGRSKGGNFVTFGEYGLQAITTSWITSRQIESARIAMTRYMKRGGKVWIKIFPHTPYTKKPLEVRMGAGKGAVEGWIAVVKPGRILFEVAGVSEEVAREALRLASHKLPVKTKFVKREELGGESNES</sequence>
<evidence type="ECO:0000255" key="1">
    <source>
        <dbReference type="HAMAP-Rule" id="MF_01342"/>
    </source>
</evidence>
<evidence type="ECO:0000256" key="2">
    <source>
        <dbReference type="SAM" id="MobiDB-lite"/>
    </source>
</evidence>
<evidence type="ECO:0000305" key="3"/>
<name>RL16_STACT</name>
<feature type="chain" id="PRO_1000166378" description="Large ribosomal subunit protein uL16">
    <location>
        <begin position="1"/>
        <end position="144"/>
    </location>
</feature>
<feature type="region of interest" description="Disordered" evidence="2">
    <location>
        <begin position="1"/>
        <end position="23"/>
    </location>
</feature>
<feature type="compositionally biased region" description="Basic residues" evidence="2">
    <location>
        <begin position="1"/>
        <end position="19"/>
    </location>
</feature>
<comment type="function">
    <text evidence="1">Binds 23S rRNA and is also seen to make contacts with the A and possibly P site tRNAs.</text>
</comment>
<comment type="subunit">
    <text evidence="1">Part of the 50S ribosomal subunit.</text>
</comment>
<comment type="similarity">
    <text evidence="1">Belongs to the universal ribosomal protein uL16 family.</text>
</comment>
<reference key="1">
    <citation type="journal article" date="2009" name="Appl. Environ. Microbiol.">
        <title>Genome analysis of the meat starter culture bacterium Staphylococcus carnosus TM300.</title>
        <authorList>
            <person name="Rosenstein R."/>
            <person name="Nerz C."/>
            <person name="Biswas L."/>
            <person name="Resch A."/>
            <person name="Raddatz G."/>
            <person name="Schuster S.C."/>
            <person name="Goetz F."/>
        </authorList>
    </citation>
    <scope>NUCLEOTIDE SEQUENCE [LARGE SCALE GENOMIC DNA]</scope>
    <source>
        <strain>TM300</strain>
    </source>
</reference>
<dbReference type="EMBL" id="AM295250">
    <property type="protein sequence ID" value="CAL28634.1"/>
    <property type="molecule type" value="Genomic_DNA"/>
</dbReference>
<dbReference type="RefSeq" id="WP_015900970.1">
    <property type="nucleotide sequence ID" value="NC_012121.1"/>
</dbReference>
<dbReference type="SMR" id="B9DM40"/>
<dbReference type="GeneID" id="93794187"/>
<dbReference type="KEGG" id="sca:SCA_1728"/>
<dbReference type="eggNOG" id="COG0197">
    <property type="taxonomic scope" value="Bacteria"/>
</dbReference>
<dbReference type="HOGENOM" id="CLU_078858_2_1_9"/>
<dbReference type="OrthoDB" id="9802589at2"/>
<dbReference type="BioCyc" id="SCAR396513:SCA_RS08805-MONOMER"/>
<dbReference type="Proteomes" id="UP000000444">
    <property type="component" value="Chromosome"/>
</dbReference>
<dbReference type="GO" id="GO:0022625">
    <property type="term" value="C:cytosolic large ribosomal subunit"/>
    <property type="evidence" value="ECO:0007669"/>
    <property type="project" value="TreeGrafter"/>
</dbReference>
<dbReference type="GO" id="GO:0019843">
    <property type="term" value="F:rRNA binding"/>
    <property type="evidence" value="ECO:0007669"/>
    <property type="project" value="UniProtKB-UniRule"/>
</dbReference>
<dbReference type="GO" id="GO:0003735">
    <property type="term" value="F:structural constituent of ribosome"/>
    <property type="evidence" value="ECO:0007669"/>
    <property type="project" value="InterPro"/>
</dbReference>
<dbReference type="GO" id="GO:0000049">
    <property type="term" value="F:tRNA binding"/>
    <property type="evidence" value="ECO:0007669"/>
    <property type="project" value="UniProtKB-KW"/>
</dbReference>
<dbReference type="GO" id="GO:0006412">
    <property type="term" value="P:translation"/>
    <property type="evidence" value="ECO:0007669"/>
    <property type="project" value="UniProtKB-UniRule"/>
</dbReference>
<dbReference type="CDD" id="cd01433">
    <property type="entry name" value="Ribosomal_L16_L10e"/>
    <property type="match status" value="1"/>
</dbReference>
<dbReference type="FunFam" id="3.90.1170.10:FF:000001">
    <property type="entry name" value="50S ribosomal protein L16"/>
    <property type="match status" value="1"/>
</dbReference>
<dbReference type="Gene3D" id="3.90.1170.10">
    <property type="entry name" value="Ribosomal protein L10e/L16"/>
    <property type="match status" value="1"/>
</dbReference>
<dbReference type="HAMAP" id="MF_01342">
    <property type="entry name" value="Ribosomal_uL16"/>
    <property type="match status" value="1"/>
</dbReference>
<dbReference type="InterPro" id="IPR047873">
    <property type="entry name" value="Ribosomal_uL16"/>
</dbReference>
<dbReference type="InterPro" id="IPR000114">
    <property type="entry name" value="Ribosomal_uL16_bact-type"/>
</dbReference>
<dbReference type="InterPro" id="IPR020798">
    <property type="entry name" value="Ribosomal_uL16_CS"/>
</dbReference>
<dbReference type="InterPro" id="IPR016180">
    <property type="entry name" value="Ribosomal_uL16_dom"/>
</dbReference>
<dbReference type="InterPro" id="IPR036920">
    <property type="entry name" value="Ribosomal_uL16_sf"/>
</dbReference>
<dbReference type="NCBIfam" id="TIGR01164">
    <property type="entry name" value="rplP_bact"/>
    <property type="match status" value="1"/>
</dbReference>
<dbReference type="PANTHER" id="PTHR12220">
    <property type="entry name" value="50S/60S RIBOSOMAL PROTEIN L16"/>
    <property type="match status" value="1"/>
</dbReference>
<dbReference type="PANTHER" id="PTHR12220:SF13">
    <property type="entry name" value="LARGE RIBOSOMAL SUBUNIT PROTEIN UL16M"/>
    <property type="match status" value="1"/>
</dbReference>
<dbReference type="Pfam" id="PF00252">
    <property type="entry name" value="Ribosomal_L16"/>
    <property type="match status" value="1"/>
</dbReference>
<dbReference type="PRINTS" id="PR00060">
    <property type="entry name" value="RIBOSOMALL16"/>
</dbReference>
<dbReference type="SUPFAM" id="SSF54686">
    <property type="entry name" value="Ribosomal protein L16p/L10e"/>
    <property type="match status" value="1"/>
</dbReference>
<dbReference type="PROSITE" id="PS00586">
    <property type="entry name" value="RIBOSOMAL_L16_1"/>
    <property type="match status" value="1"/>
</dbReference>
<dbReference type="PROSITE" id="PS00701">
    <property type="entry name" value="RIBOSOMAL_L16_2"/>
    <property type="match status" value="1"/>
</dbReference>
<proteinExistence type="inferred from homology"/>